<accession>Q68X41</accession>
<name>YQGF_RICTY</name>
<proteinExistence type="inferred from homology"/>
<organism>
    <name type="scientific">Rickettsia typhi (strain ATCC VR-144 / Wilmington)</name>
    <dbReference type="NCBI Taxonomy" id="257363"/>
    <lineage>
        <taxon>Bacteria</taxon>
        <taxon>Pseudomonadati</taxon>
        <taxon>Pseudomonadota</taxon>
        <taxon>Alphaproteobacteria</taxon>
        <taxon>Rickettsiales</taxon>
        <taxon>Rickettsiaceae</taxon>
        <taxon>Rickettsieae</taxon>
        <taxon>Rickettsia</taxon>
        <taxon>typhus group</taxon>
    </lineage>
</organism>
<reference key="1">
    <citation type="journal article" date="2004" name="J. Bacteriol.">
        <title>Complete genome sequence of Rickettsia typhi and comparison with sequences of other Rickettsiae.</title>
        <authorList>
            <person name="McLeod M.P."/>
            <person name="Qin X."/>
            <person name="Karpathy S.E."/>
            <person name="Gioia J."/>
            <person name="Highlander S.K."/>
            <person name="Fox G.E."/>
            <person name="McNeill T.Z."/>
            <person name="Jiang H."/>
            <person name="Muzny D."/>
            <person name="Jacob L.S."/>
            <person name="Hawes A.C."/>
            <person name="Sodergren E."/>
            <person name="Gill R."/>
            <person name="Hume J."/>
            <person name="Morgan M."/>
            <person name="Fan G."/>
            <person name="Amin A.G."/>
            <person name="Gibbs R.A."/>
            <person name="Hong C."/>
            <person name="Yu X.-J."/>
            <person name="Walker D.H."/>
            <person name="Weinstock G.M."/>
        </authorList>
    </citation>
    <scope>NUCLEOTIDE SEQUENCE [LARGE SCALE GENOMIC DNA]</scope>
    <source>
        <strain>ATCC VR-144 / Wilmington</strain>
    </source>
</reference>
<evidence type="ECO:0000255" key="1">
    <source>
        <dbReference type="HAMAP-Rule" id="MF_00651"/>
    </source>
</evidence>
<feature type="chain" id="PRO_0000172130" description="Putative pre-16S rRNA nuclease">
    <location>
        <begin position="1"/>
        <end position="156"/>
    </location>
</feature>
<sequence length="156" mass="17422">MIIKNLQEFYRLLIPNEPLIAIDYGSKKIGVALSDQALAIAMPLNTITELNQRVIITSLLNIIEKYQVCGIVIGLPIDMSGGVTKQTNIVMKFADKLKQSVSLPIYLQDERLTTKSANNFLKSFGIKRKDRNNNDDAVAASMILEIVLNAIKRFNL</sequence>
<comment type="function">
    <text evidence="1">Could be a nuclease involved in processing of the 5'-end of pre-16S rRNA.</text>
</comment>
<comment type="subcellular location">
    <subcellularLocation>
        <location evidence="1">Cytoplasm</location>
    </subcellularLocation>
</comment>
<comment type="similarity">
    <text evidence="1">Belongs to the YqgF nuclease family.</text>
</comment>
<gene>
    <name type="ordered locus">RT0321</name>
</gene>
<keyword id="KW-0963">Cytoplasm</keyword>
<keyword id="KW-0378">Hydrolase</keyword>
<keyword id="KW-0540">Nuclease</keyword>
<keyword id="KW-0690">Ribosome biogenesis</keyword>
<dbReference type="EC" id="3.1.-.-" evidence="1"/>
<dbReference type="EMBL" id="AE017197">
    <property type="protein sequence ID" value="AAU03801.1"/>
    <property type="molecule type" value="Genomic_DNA"/>
</dbReference>
<dbReference type="SMR" id="Q68X41"/>
<dbReference type="KEGG" id="rty:RT0321"/>
<dbReference type="eggNOG" id="COG0816">
    <property type="taxonomic scope" value="Bacteria"/>
</dbReference>
<dbReference type="HOGENOM" id="CLU_098240_2_2_5"/>
<dbReference type="OrthoDB" id="9796140at2"/>
<dbReference type="Proteomes" id="UP000000604">
    <property type="component" value="Chromosome"/>
</dbReference>
<dbReference type="GO" id="GO:0005829">
    <property type="term" value="C:cytosol"/>
    <property type="evidence" value="ECO:0007669"/>
    <property type="project" value="TreeGrafter"/>
</dbReference>
<dbReference type="GO" id="GO:0004518">
    <property type="term" value="F:nuclease activity"/>
    <property type="evidence" value="ECO:0007669"/>
    <property type="project" value="UniProtKB-KW"/>
</dbReference>
<dbReference type="GO" id="GO:0000967">
    <property type="term" value="P:rRNA 5'-end processing"/>
    <property type="evidence" value="ECO:0007669"/>
    <property type="project" value="UniProtKB-UniRule"/>
</dbReference>
<dbReference type="CDD" id="cd16964">
    <property type="entry name" value="YqgF"/>
    <property type="match status" value="1"/>
</dbReference>
<dbReference type="Gene3D" id="3.30.420.140">
    <property type="entry name" value="YqgF/RNase H-like domain"/>
    <property type="match status" value="1"/>
</dbReference>
<dbReference type="HAMAP" id="MF_00651">
    <property type="entry name" value="Nuclease_YqgF"/>
    <property type="match status" value="1"/>
</dbReference>
<dbReference type="InterPro" id="IPR012337">
    <property type="entry name" value="RNaseH-like_sf"/>
</dbReference>
<dbReference type="InterPro" id="IPR005227">
    <property type="entry name" value="YqgF"/>
</dbReference>
<dbReference type="InterPro" id="IPR006641">
    <property type="entry name" value="YqgF/RNaseH-like_dom"/>
</dbReference>
<dbReference type="InterPro" id="IPR037027">
    <property type="entry name" value="YqgF/RNaseH-like_dom_sf"/>
</dbReference>
<dbReference type="NCBIfam" id="TIGR00250">
    <property type="entry name" value="RNAse_H_YqgF"/>
    <property type="match status" value="1"/>
</dbReference>
<dbReference type="PANTHER" id="PTHR33317">
    <property type="entry name" value="POLYNUCLEOTIDYL TRANSFERASE, RIBONUCLEASE H-LIKE SUPERFAMILY PROTEIN"/>
    <property type="match status" value="1"/>
</dbReference>
<dbReference type="PANTHER" id="PTHR33317:SF4">
    <property type="entry name" value="POLYNUCLEOTIDYL TRANSFERASE, RIBONUCLEASE H-LIKE SUPERFAMILY PROTEIN"/>
    <property type="match status" value="1"/>
</dbReference>
<dbReference type="Pfam" id="PF03652">
    <property type="entry name" value="RuvX"/>
    <property type="match status" value="1"/>
</dbReference>
<dbReference type="SMART" id="SM00732">
    <property type="entry name" value="YqgFc"/>
    <property type="match status" value="1"/>
</dbReference>
<dbReference type="SUPFAM" id="SSF53098">
    <property type="entry name" value="Ribonuclease H-like"/>
    <property type="match status" value="1"/>
</dbReference>
<protein>
    <recommendedName>
        <fullName evidence="1">Putative pre-16S rRNA nuclease</fullName>
        <ecNumber evidence="1">3.1.-.-</ecNumber>
    </recommendedName>
</protein>